<feature type="chain" id="PRO_0000451565" description="Nucleoporin Nup188" evidence="4">
    <location>
        <begin position="1"/>
        <end position="1866"/>
    </location>
</feature>
<feature type="splice variant" id="VSP_060803" description="In isoform B." evidence="4">
    <location>
        <begin position="1012"/>
        <end position="1038"/>
    </location>
</feature>
<organism evidence="6">
    <name type="scientific">Drosophila melanogaster</name>
    <name type="common">Fruit fly</name>
    <dbReference type="NCBI Taxonomy" id="7227"/>
    <lineage>
        <taxon>Eukaryota</taxon>
        <taxon>Metazoa</taxon>
        <taxon>Ecdysozoa</taxon>
        <taxon>Arthropoda</taxon>
        <taxon>Hexapoda</taxon>
        <taxon>Insecta</taxon>
        <taxon>Pterygota</taxon>
        <taxon>Neoptera</taxon>
        <taxon>Endopterygota</taxon>
        <taxon>Diptera</taxon>
        <taxon>Brachycera</taxon>
        <taxon>Muscomorpha</taxon>
        <taxon>Ephydroidea</taxon>
        <taxon>Drosophilidae</taxon>
        <taxon>Drosophila</taxon>
        <taxon>Sophophora</taxon>
    </lineage>
</organism>
<protein>
    <recommendedName>
        <fullName evidence="3">Nucleoporin Nup188</fullName>
    </recommendedName>
    <alternativeName>
        <fullName evidence="5">Nucleoporin 188kDa</fullName>
    </alternativeName>
</protein>
<comment type="function">
    <text evidence="1">Component of the nuclear pore complex (NPC), a complex required for the trafficking across the nuclear envelope. Required for proper protein transport into the nucleus.</text>
</comment>
<comment type="subunit">
    <text evidence="1">Part of the nuclear pore complex (NPC).</text>
</comment>
<comment type="subcellular location">
    <subcellularLocation>
        <location evidence="1">Nucleus</location>
        <location evidence="1">Nuclear pore complex</location>
    </subcellularLocation>
</comment>
<comment type="alternative products">
    <event type="alternative splicing"/>
    <isoform>
        <id>A0A0B4K859-1</id>
        <name evidence="5">C</name>
        <sequence type="displayed"/>
    </isoform>
    <isoform>
        <id>A0A0B4K859-2</id>
        <name evidence="5">B</name>
        <sequence type="described" ref="VSP_060803"/>
    </isoform>
</comment>
<comment type="disruption phenotype">
    <text evidence="2">Lethal at the pupal stage with stronger phenotype with temperature increase (PubMed:32275884). Impairs sensory dendrite tiling on the larval body (PubMed:32275884). In escapers flies, leads to decreased negative geotaxis and seizures (PubMed:32275884).</text>
</comment>
<comment type="similarity">
    <text evidence="4">Belongs to the Nup188 family.</text>
</comment>
<reference evidence="6" key="1">
    <citation type="journal article" date="2000" name="Science">
        <title>The genome sequence of Drosophila melanogaster.</title>
        <authorList>
            <person name="Adams M.D."/>
            <person name="Celniker S.E."/>
            <person name="Holt R.A."/>
            <person name="Evans C.A."/>
            <person name="Gocayne J.D."/>
            <person name="Amanatides P.G."/>
            <person name="Scherer S.E."/>
            <person name="Li P.W."/>
            <person name="Hoskins R.A."/>
            <person name="Galle R.F."/>
            <person name="George R.A."/>
            <person name="Lewis S.E."/>
            <person name="Richards S."/>
            <person name="Ashburner M."/>
            <person name="Henderson S.N."/>
            <person name="Sutton G.G."/>
            <person name="Wortman J.R."/>
            <person name="Yandell M.D."/>
            <person name="Zhang Q."/>
            <person name="Chen L.X."/>
            <person name="Brandon R.C."/>
            <person name="Rogers Y.-H.C."/>
            <person name="Blazej R.G."/>
            <person name="Champe M."/>
            <person name="Pfeiffer B.D."/>
            <person name="Wan K.H."/>
            <person name="Doyle C."/>
            <person name="Baxter E.G."/>
            <person name="Helt G."/>
            <person name="Nelson C.R."/>
            <person name="Miklos G.L.G."/>
            <person name="Abril J.F."/>
            <person name="Agbayani A."/>
            <person name="An H.-J."/>
            <person name="Andrews-Pfannkoch C."/>
            <person name="Baldwin D."/>
            <person name="Ballew R.M."/>
            <person name="Basu A."/>
            <person name="Baxendale J."/>
            <person name="Bayraktaroglu L."/>
            <person name="Beasley E.M."/>
            <person name="Beeson K.Y."/>
            <person name="Benos P.V."/>
            <person name="Berman B.P."/>
            <person name="Bhandari D."/>
            <person name="Bolshakov S."/>
            <person name="Borkova D."/>
            <person name="Botchan M.R."/>
            <person name="Bouck J."/>
            <person name="Brokstein P."/>
            <person name="Brottier P."/>
            <person name="Burtis K.C."/>
            <person name="Busam D.A."/>
            <person name="Butler H."/>
            <person name="Cadieu E."/>
            <person name="Center A."/>
            <person name="Chandra I."/>
            <person name="Cherry J.M."/>
            <person name="Cawley S."/>
            <person name="Dahlke C."/>
            <person name="Davenport L.B."/>
            <person name="Davies P."/>
            <person name="de Pablos B."/>
            <person name="Delcher A."/>
            <person name="Deng Z."/>
            <person name="Mays A.D."/>
            <person name="Dew I."/>
            <person name="Dietz S.M."/>
            <person name="Dodson K."/>
            <person name="Doup L.E."/>
            <person name="Downes M."/>
            <person name="Dugan-Rocha S."/>
            <person name="Dunkov B.C."/>
            <person name="Dunn P."/>
            <person name="Durbin K.J."/>
            <person name="Evangelista C.C."/>
            <person name="Ferraz C."/>
            <person name="Ferriera S."/>
            <person name="Fleischmann W."/>
            <person name="Fosler C."/>
            <person name="Gabrielian A.E."/>
            <person name="Garg N.S."/>
            <person name="Gelbart W.M."/>
            <person name="Glasser K."/>
            <person name="Glodek A."/>
            <person name="Gong F."/>
            <person name="Gorrell J.H."/>
            <person name="Gu Z."/>
            <person name="Guan P."/>
            <person name="Harris M."/>
            <person name="Harris N.L."/>
            <person name="Harvey D.A."/>
            <person name="Heiman T.J."/>
            <person name="Hernandez J.R."/>
            <person name="Houck J."/>
            <person name="Hostin D."/>
            <person name="Houston K.A."/>
            <person name="Howland T.J."/>
            <person name="Wei M.-H."/>
            <person name="Ibegwam C."/>
            <person name="Jalali M."/>
            <person name="Kalush F."/>
            <person name="Karpen G.H."/>
            <person name="Ke Z."/>
            <person name="Kennison J.A."/>
            <person name="Ketchum K.A."/>
            <person name="Kimmel B.E."/>
            <person name="Kodira C.D."/>
            <person name="Kraft C.L."/>
            <person name="Kravitz S."/>
            <person name="Kulp D."/>
            <person name="Lai Z."/>
            <person name="Lasko P."/>
            <person name="Lei Y."/>
            <person name="Levitsky A.A."/>
            <person name="Li J.H."/>
            <person name="Li Z."/>
            <person name="Liang Y."/>
            <person name="Lin X."/>
            <person name="Liu X."/>
            <person name="Mattei B."/>
            <person name="McIntosh T.C."/>
            <person name="McLeod M.P."/>
            <person name="McPherson D."/>
            <person name="Merkulov G."/>
            <person name="Milshina N.V."/>
            <person name="Mobarry C."/>
            <person name="Morris J."/>
            <person name="Moshrefi A."/>
            <person name="Mount S.M."/>
            <person name="Moy M."/>
            <person name="Murphy B."/>
            <person name="Murphy L."/>
            <person name="Muzny D.M."/>
            <person name="Nelson D.L."/>
            <person name="Nelson D.R."/>
            <person name="Nelson K.A."/>
            <person name="Nixon K."/>
            <person name="Nusskern D.R."/>
            <person name="Pacleb J.M."/>
            <person name="Palazzolo M."/>
            <person name="Pittman G.S."/>
            <person name="Pan S."/>
            <person name="Pollard J."/>
            <person name="Puri V."/>
            <person name="Reese M.G."/>
            <person name="Reinert K."/>
            <person name="Remington K."/>
            <person name="Saunders R.D.C."/>
            <person name="Scheeler F."/>
            <person name="Shen H."/>
            <person name="Shue B.C."/>
            <person name="Siden-Kiamos I."/>
            <person name="Simpson M."/>
            <person name="Skupski M.P."/>
            <person name="Smith T.J."/>
            <person name="Spier E."/>
            <person name="Spradling A.C."/>
            <person name="Stapleton M."/>
            <person name="Strong R."/>
            <person name="Sun E."/>
            <person name="Svirskas R."/>
            <person name="Tector C."/>
            <person name="Turner R."/>
            <person name="Venter E."/>
            <person name="Wang A.H."/>
            <person name="Wang X."/>
            <person name="Wang Z.-Y."/>
            <person name="Wassarman D.A."/>
            <person name="Weinstock G.M."/>
            <person name="Weissenbach J."/>
            <person name="Williams S.M."/>
            <person name="Woodage T."/>
            <person name="Worley K.C."/>
            <person name="Wu D."/>
            <person name="Yang S."/>
            <person name="Yao Q.A."/>
            <person name="Ye J."/>
            <person name="Yeh R.-F."/>
            <person name="Zaveri J.S."/>
            <person name="Zhan M."/>
            <person name="Zhang G."/>
            <person name="Zhao Q."/>
            <person name="Zheng L."/>
            <person name="Zheng X.H."/>
            <person name="Zhong F.N."/>
            <person name="Zhong W."/>
            <person name="Zhou X."/>
            <person name="Zhu S.C."/>
            <person name="Zhu X."/>
            <person name="Smith H.O."/>
            <person name="Gibbs R.A."/>
            <person name="Myers E.W."/>
            <person name="Rubin G.M."/>
            <person name="Venter J.C."/>
        </authorList>
    </citation>
    <scope>NUCLEOTIDE SEQUENCE [LARGE SCALE GENOMIC DNA]</scope>
    <source>
        <strain evidence="6">Berkeley</strain>
    </source>
</reference>
<reference evidence="6" key="2">
    <citation type="journal article" date="2002" name="Genome Biol.">
        <title>Annotation of the Drosophila melanogaster euchromatic genome: a systematic review.</title>
        <authorList>
            <person name="Misra S."/>
            <person name="Crosby M.A."/>
            <person name="Mungall C.J."/>
            <person name="Matthews B.B."/>
            <person name="Campbell K.S."/>
            <person name="Hradecky P."/>
            <person name="Huang Y."/>
            <person name="Kaminker J.S."/>
            <person name="Millburn G.H."/>
            <person name="Prochnik S.E."/>
            <person name="Smith C.D."/>
            <person name="Tupy J.L."/>
            <person name="Whitfield E.J."/>
            <person name="Bayraktaroglu L."/>
            <person name="Berman B.P."/>
            <person name="Bettencourt B.R."/>
            <person name="Celniker S.E."/>
            <person name="de Grey A.D.N.J."/>
            <person name="Drysdale R.A."/>
            <person name="Harris N.L."/>
            <person name="Richter J."/>
            <person name="Russo S."/>
            <person name="Schroeder A.J."/>
            <person name="Shu S.Q."/>
            <person name="Stapleton M."/>
            <person name="Yamada C."/>
            <person name="Ashburner M."/>
            <person name="Gelbart W.M."/>
            <person name="Rubin G.M."/>
            <person name="Lewis S.E."/>
        </authorList>
    </citation>
    <scope>GENOME REANNOTATION</scope>
    <source>
        <strain evidence="6">Berkeley</strain>
    </source>
</reference>
<reference evidence="4" key="3">
    <citation type="journal article" date="2020" name="Am. J. Hum. Genet.">
        <title>Bi-allelic loss-of-function variants in NUP188 cause a recognizable syndrome characterized by neurologic, ocular, and cardiac abnormalities.</title>
        <authorList>
            <person name="Muir A.M."/>
            <person name="Cohen J.L."/>
            <person name="Sheppard S.E."/>
            <person name="Guttipatti P."/>
            <person name="Lo T.Y."/>
            <person name="Weed N."/>
            <person name="Doherty D."/>
            <person name="DeMarzo D."/>
            <person name="Fagerberg C.R."/>
            <person name="Kjaersgaard L."/>
            <person name="Larsen M.J."/>
            <person name="Rump P."/>
            <person name="Loehner K."/>
            <person name="Hirsch Y."/>
            <person name="Zeevi D.A."/>
            <person name="Zackai E.H."/>
            <person name="Bhoj E."/>
            <person name="Song Y."/>
            <person name="Mefford H.C."/>
        </authorList>
    </citation>
    <scope>DISRUPTION PHENOTYPE</scope>
</reference>
<proteinExistence type="inferred from homology"/>
<evidence type="ECO:0000250" key="1">
    <source>
        <dbReference type="UniProtKB" id="Q5SRE5"/>
    </source>
</evidence>
<evidence type="ECO:0000269" key="2">
    <source>
    </source>
</evidence>
<evidence type="ECO:0000303" key="3">
    <source>
    </source>
</evidence>
<evidence type="ECO:0000305" key="4"/>
<evidence type="ECO:0000312" key="5">
    <source>
        <dbReference type="FlyBase" id="FBgn0033766"/>
    </source>
</evidence>
<evidence type="ECO:0000312" key="6">
    <source>
        <dbReference type="Proteomes" id="UP000000803"/>
    </source>
</evidence>
<name>NU188_DROME</name>
<keyword id="KW-0025">Alternative splicing</keyword>
<keyword id="KW-0509">mRNA transport</keyword>
<keyword id="KW-0906">Nuclear pore complex</keyword>
<keyword id="KW-0539">Nucleus</keyword>
<keyword id="KW-0653">Protein transport</keyword>
<keyword id="KW-1185">Reference proteome</keyword>
<keyword id="KW-0811">Translocation</keyword>
<keyword id="KW-0813">Transport</keyword>
<accession>A0A0B4K859</accession>
<accession>A1Z945</accession>
<sequence length="1866" mass="213609">MPAVEKSVITDWKRLWPMVSGIHYETPQDTVREELMNVASELQAGVLQFKPKNASSLELGTLLKEKKQEKLLPFTERLQDLLDLESAQCWEILCYYLTQEYRGSASLLTQLISTETNMAKLHEDIRHYYSLERMVVLKIVKNLIVFHQVPNHPYHREYRAVVEKITIPRLRDSYLDQLESLICEVPPRKLMAGECFHSAERLVAWSERNAREINEVLHILLVLAEHLPMGLEQIKRIFAACKQHSFGKMQSYLDDSQPYHQEIIRSLSYSELMLVLKCLDFEKPEKHSDLIEKLIEDLQVDIASMYHRPEHGPLLLAWMLLRLRGTNDADDASSLLRCRQLGKRAVDLKCFVQLHLIARHSMYADDSMLSRIVRRTIYNQVGYLCDLFDGDGSCARYEGIYELLCELVSWPHLAKDFCSREDDGPCSLYKTLLENFPLELTHLSKLALSLTKAGQGNYVKSQLEALPILALRYDESQHKLREVDTNEFELLASVQPFQQIDFTIPAGTSCTAIQHPSGCFMHFRFPVNYFDALHHEINCLLRETGHLHGDFESSERIRNVEAGLRFLESAVKLSQSISGISAEMVHPTEMCVDLLHTFKSVQYPPVGLLSSCLNVCTALLPLVDEEIFSRISNLHILPTVSPGSHYDFKMYANANGVGFESRFLGSVIDNVEKKRERYEFLLSYIGFLRAYSNLKRNRQIQMEIPGLIFLLKDVFPHLHTWHFSSQVERNKIYFEILSFICDILDLFNTAKESNCKQRELLVKVCVYSLLNLENGLILLRFVGVGNAYVQYTMELETNWMQQQPHGLMMLVRLSMRILMQLLRLKEEVYGNSETLSPLEALIYTQPKQRDTLRIIPTVCSYMSNIFDRWLPILSCRLLKRIALQFNMSLLACLDMEADQIRLTFMQKLPDELESDSIKIAILELVDACIAKQPGVTEAFFKVNYALDKRSRSFFSKDCVPNIGESIVTYMRDFLDALQVDPLTIQQALPAKIMTIFHSMWKHNLQMLVDDLVKDKQFWKKLCSPLFSELQPNLRIYTQLLNIISIEVYTGNGNNAALLDVMNKFFEQKNFGPWLNYVFNMPKVPAVKNLSSSDHLPDWICCLQAFKDLIVILLKKQPKFVTIPESQFKLMAQKCLVVLVDRSNYLEDMRPFIILAELYVFILLEFKHAYTDSLEEEQTLMDLLLQLMNRICACYEDQHVRAKEACLAIVTKCTHLYTDLLIRDSSIALRFLNSVVGIICSELQHMENSVSLEKSQGLNNSDSSDSKTSTNSLILCLNLLKAVATIFHNDGPGNWDLPFVSVRLFQRLVRCVSRTLPLFSKQVLSVQLLDVLIVFAKGHCSVEFLHCDVGEYLWLKLLPPRELLQSKHEFTKTTAADAEGWTVEQWWPVYARGIELVTIIYEKHKKCFLEDAFQFVGIHAVFLEDALLLSKQSLEPSAMYLIKAAVNLVASLTEHHKEWKQDSDLSLANLMRAVQSLLCHTSSLFHQQKNLKCLLAGRRSQLEILRSTEALIVDDELISACNDLTDIIISCVKALLRFSPDLMELLCCSAYEPSKHSILLDVKFGAPKLNEENLTLTFGIVLNLVNIYVKALNMQNHGFSEVPLNSLPNVEHSGDNDDPEVCVGNQTNRTFSKPLSNVSISTGTCPASELLSNMDGQLCLLALEHLLMLVASQAICIIRSPNLETLWKQIVRRDISNELLIFNEFVRRKVILDYKENRSPWLRRKHGLCKLKCVDPVRSSSSSSRSSEIVRRSNTNNELRVNVVRRLHLQQQQRTPPPQNFDMSSDLSPIAAAQGAAMTTSLDGRKRLYPAQQAGDAFLEDELAAIELQYFPPPTEPGYCELSQVQVVEEDYLQLMSALFNVMPHCD</sequence>
<gene>
    <name evidence="3 5" type="primary">Nup188</name>
    <name evidence="5" type="ORF">CG8771</name>
</gene>
<dbReference type="EMBL" id="AE013599">
    <property type="protein sequence ID" value="AAF58471.4"/>
    <property type="molecule type" value="Genomic_DNA"/>
</dbReference>
<dbReference type="EMBL" id="AE013599">
    <property type="protein sequence ID" value="AFH08037.1"/>
    <property type="molecule type" value="Genomic_DNA"/>
</dbReference>
<dbReference type="RefSeq" id="NP_001246283.1">
    <molecule id="A0A0B4K859-1"/>
    <property type="nucleotide sequence ID" value="NM_001259354.2"/>
</dbReference>
<dbReference type="RefSeq" id="NP_610810.2">
    <molecule id="A0A0B4K859-2"/>
    <property type="nucleotide sequence ID" value="NM_136966.4"/>
</dbReference>
<dbReference type="SMR" id="A0A0B4K859"/>
<dbReference type="ComplexPortal" id="CPX-2568">
    <property type="entry name" value="Nuclear pore complex"/>
</dbReference>
<dbReference type="FunCoup" id="A0A0B4K859">
    <property type="interactions" value="1998"/>
</dbReference>
<dbReference type="IntAct" id="A0A0B4K859">
    <property type="interactions" value="6"/>
</dbReference>
<dbReference type="MINT" id="A0A0B4K859"/>
<dbReference type="STRING" id="7227.FBpp0297623"/>
<dbReference type="PaxDb" id="7227-FBpp0297623"/>
<dbReference type="EnsemblMetazoa" id="FBtr0302596">
    <molecule id="A0A0B4K859-2"/>
    <property type="protein sequence ID" value="FBpp0291752"/>
    <property type="gene ID" value="FBgn0033766"/>
</dbReference>
<dbReference type="EnsemblMetazoa" id="FBtr0306684">
    <molecule id="A0A0B4K859-1"/>
    <property type="protein sequence ID" value="FBpp0297623"/>
    <property type="gene ID" value="FBgn0033766"/>
</dbReference>
<dbReference type="GeneID" id="36397"/>
<dbReference type="KEGG" id="dme:Dmel_CG8771"/>
<dbReference type="UCSC" id="CG8771-RA">
    <property type="organism name" value="d. melanogaster"/>
</dbReference>
<dbReference type="AGR" id="FB:FBgn0033766"/>
<dbReference type="CTD" id="23511"/>
<dbReference type="FlyBase" id="FBgn0033766">
    <property type="gene designation" value="Nup188"/>
</dbReference>
<dbReference type="VEuPathDB" id="VectorBase:FBgn0033766"/>
<dbReference type="eggNOG" id="KOG4833">
    <property type="taxonomic scope" value="Eukaryota"/>
</dbReference>
<dbReference type="GeneTree" id="ENSGT00390000005742"/>
<dbReference type="InParanoid" id="A0A0B4K859"/>
<dbReference type="OMA" id="PMAEMNF"/>
<dbReference type="OrthoDB" id="102511at2759"/>
<dbReference type="PhylomeDB" id="A0A0B4K859"/>
<dbReference type="Reactome" id="R-DME-159227">
    <property type="pathway name" value="Transport of the SLBP independent Mature mRNA"/>
</dbReference>
<dbReference type="Reactome" id="R-DME-159230">
    <property type="pathway name" value="Transport of the SLBP Dependant Mature mRNA"/>
</dbReference>
<dbReference type="Reactome" id="R-DME-159231">
    <property type="pathway name" value="Transport of Mature mRNA Derived from an Intronless Transcript"/>
</dbReference>
<dbReference type="Reactome" id="R-DME-159236">
    <property type="pathway name" value="Transport of Mature mRNA derived from an Intron-Containing Transcript"/>
</dbReference>
<dbReference type="Reactome" id="R-DME-3108214">
    <property type="pathway name" value="SUMOylation of DNA damage response and repair proteins"/>
</dbReference>
<dbReference type="Reactome" id="R-DME-3301854">
    <property type="pathway name" value="Nuclear Pore Complex (NPC) Disassembly"/>
</dbReference>
<dbReference type="Reactome" id="R-DME-4085377">
    <property type="pathway name" value="SUMOylation of SUMOylation proteins"/>
</dbReference>
<dbReference type="Reactome" id="R-DME-4551638">
    <property type="pathway name" value="SUMOylation of chromatin organization proteins"/>
</dbReference>
<dbReference type="Reactome" id="R-DME-4615885">
    <property type="pathway name" value="SUMOylation of DNA replication proteins"/>
</dbReference>
<dbReference type="Reactome" id="R-DME-5578749">
    <property type="pathway name" value="Transcriptional regulation by small RNAs"/>
</dbReference>
<dbReference type="Reactome" id="R-DME-9615933">
    <property type="pathway name" value="Postmitotic nuclear pore complex (NPC) reformation"/>
</dbReference>
<dbReference type="SignaLink" id="A0A0B4K859"/>
<dbReference type="BioGRID-ORCS" id="36397">
    <property type="hits" value="1 hit in 1 CRISPR screen"/>
</dbReference>
<dbReference type="GenomeRNAi" id="36397"/>
<dbReference type="PRO" id="PR:A0A0B4K859"/>
<dbReference type="Proteomes" id="UP000000803">
    <property type="component" value="Chromosome 2R"/>
</dbReference>
<dbReference type="Bgee" id="FBgn0033766">
    <property type="expression patterns" value="Expressed in enteroblast (Drosophila) in digestive tract and 36 other cell types or tissues"/>
</dbReference>
<dbReference type="ExpressionAtlas" id="A0A0B4K859">
    <property type="expression patterns" value="baseline and differential"/>
</dbReference>
<dbReference type="GO" id="GO:0044611">
    <property type="term" value="C:nuclear pore inner ring"/>
    <property type="evidence" value="ECO:0000250"/>
    <property type="project" value="FlyBase"/>
</dbReference>
<dbReference type="GO" id="GO:0017056">
    <property type="term" value="F:structural constituent of nuclear pore"/>
    <property type="evidence" value="ECO:0000250"/>
    <property type="project" value="FlyBase"/>
</dbReference>
<dbReference type="GO" id="GO:0051028">
    <property type="term" value="P:mRNA transport"/>
    <property type="evidence" value="ECO:0007669"/>
    <property type="project" value="UniProtKB-KW"/>
</dbReference>
<dbReference type="GO" id="GO:0006999">
    <property type="term" value="P:nuclear pore organization"/>
    <property type="evidence" value="ECO:0000250"/>
    <property type="project" value="FlyBase"/>
</dbReference>
<dbReference type="GO" id="GO:0006606">
    <property type="term" value="P:protein import into nucleus"/>
    <property type="evidence" value="ECO:0000318"/>
    <property type="project" value="GO_Central"/>
</dbReference>
<dbReference type="GO" id="GO:0006405">
    <property type="term" value="P:RNA export from nucleus"/>
    <property type="evidence" value="ECO:0000318"/>
    <property type="project" value="GO_Central"/>
</dbReference>
<dbReference type="InterPro" id="IPR018864">
    <property type="entry name" value="Nucleoporin_Nup188_N"/>
</dbReference>
<dbReference type="InterPro" id="IPR044840">
    <property type="entry name" value="Nup188"/>
</dbReference>
<dbReference type="InterPro" id="IPR048883">
    <property type="entry name" value="Nup188_N-subdom_III"/>
</dbReference>
<dbReference type="PANTHER" id="PTHR31431:SF1">
    <property type="entry name" value="NUCLEOPORIN NUP188"/>
    <property type="match status" value="1"/>
</dbReference>
<dbReference type="PANTHER" id="PTHR31431">
    <property type="entry name" value="NUCLEOPORIN NUP188 HOMOLOG"/>
    <property type="match status" value="1"/>
</dbReference>
<dbReference type="Pfam" id="PF10487">
    <property type="entry name" value="Nup188_N"/>
    <property type="match status" value="1"/>
</dbReference>
<dbReference type="Pfam" id="PF21093">
    <property type="entry name" value="Nup188_N-subdom_III"/>
    <property type="match status" value="1"/>
</dbReference>